<gene>
    <name evidence="1" type="primary">pnp</name>
    <name type="ordered locus">Mkms_2146</name>
</gene>
<evidence type="ECO:0000255" key="1">
    <source>
        <dbReference type="HAMAP-Rule" id="MF_01595"/>
    </source>
</evidence>
<evidence type="ECO:0000256" key="2">
    <source>
        <dbReference type="SAM" id="MobiDB-lite"/>
    </source>
</evidence>
<protein>
    <recommendedName>
        <fullName evidence="1">Polyribonucleotide nucleotidyltransferase</fullName>
        <ecNumber evidence="1">2.7.7.8</ecNumber>
    </recommendedName>
    <alternativeName>
        <fullName evidence="1">Polynucleotide phosphorylase</fullName>
        <shortName evidence="1">PNPase</shortName>
    </alternativeName>
</protein>
<comment type="function">
    <text evidence="1">Involved in mRNA degradation. Catalyzes the phosphorolysis of single-stranded polyribonucleotides processively in the 3'- to 5'-direction.</text>
</comment>
<comment type="catalytic activity">
    <reaction evidence="1">
        <text>RNA(n+1) + phosphate = RNA(n) + a ribonucleoside 5'-diphosphate</text>
        <dbReference type="Rhea" id="RHEA:22096"/>
        <dbReference type="Rhea" id="RHEA-COMP:14527"/>
        <dbReference type="Rhea" id="RHEA-COMP:17342"/>
        <dbReference type="ChEBI" id="CHEBI:43474"/>
        <dbReference type="ChEBI" id="CHEBI:57930"/>
        <dbReference type="ChEBI" id="CHEBI:140395"/>
        <dbReference type="EC" id="2.7.7.8"/>
    </reaction>
</comment>
<comment type="cofactor">
    <cofactor evidence="1">
        <name>Mg(2+)</name>
        <dbReference type="ChEBI" id="CHEBI:18420"/>
    </cofactor>
</comment>
<comment type="subcellular location">
    <subcellularLocation>
        <location evidence="1">Cytoplasm</location>
    </subcellularLocation>
</comment>
<comment type="similarity">
    <text evidence="1">Belongs to the polyribonucleotide nucleotidyltransferase family.</text>
</comment>
<organism>
    <name type="scientific">Mycobacterium sp. (strain KMS)</name>
    <dbReference type="NCBI Taxonomy" id="189918"/>
    <lineage>
        <taxon>Bacteria</taxon>
        <taxon>Bacillati</taxon>
        <taxon>Actinomycetota</taxon>
        <taxon>Actinomycetes</taxon>
        <taxon>Mycobacteriales</taxon>
        <taxon>Mycobacteriaceae</taxon>
        <taxon>Mycobacterium</taxon>
    </lineage>
</organism>
<proteinExistence type="inferred from homology"/>
<dbReference type="EC" id="2.7.7.8" evidence="1"/>
<dbReference type="EMBL" id="CP000518">
    <property type="protein sequence ID" value="ABL91344.1"/>
    <property type="molecule type" value="Genomic_DNA"/>
</dbReference>
<dbReference type="SMR" id="A1UET6"/>
<dbReference type="STRING" id="189918.Mkms_2146"/>
<dbReference type="KEGG" id="mkm:Mkms_2146"/>
<dbReference type="HOGENOM" id="CLU_004217_2_2_11"/>
<dbReference type="OrthoDB" id="9804305at2"/>
<dbReference type="GO" id="GO:0005829">
    <property type="term" value="C:cytosol"/>
    <property type="evidence" value="ECO:0007669"/>
    <property type="project" value="TreeGrafter"/>
</dbReference>
<dbReference type="GO" id="GO:0000175">
    <property type="term" value="F:3'-5'-RNA exonuclease activity"/>
    <property type="evidence" value="ECO:0007669"/>
    <property type="project" value="TreeGrafter"/>
</dbReference>
<dbReference type="GO" id="GO:0000287">
    <property type="term" value="F:magnesium ion binding"/>
    <property type="evidence" value="ECO:0007669"/>
    <property type="project" value="UniProtKB-UniRule"/>
</dbReference>
<dbReference type="GO" id="GO:0004654">
    <property type="term" value="F:polyribonucleotide nucleotidyltransferase activity"/>
    <property type="evidence" value="ECO:0007669"/>
    <property type="project" value="UniProtKB-UniRule"/>
</dbReference>
<dbReference type="GO" id="GO:0003723">
    <property type="term" value="F:RNA binding"/>
    <property type="evidence" value="ECO:0007669"/>
    <property type="project" value="UniProtKB-UniRule"/>
</dbReference>
<dbReference type="GO" id="GO:0006402">
    <property type="term" value="P:mRNA catabolic process"/>
    <property type="evidence" value="ECO:0007669"/>
    <property type="project" value="UniProtKB-UniRule"/>
</dbReference>
<dbReference type="GO" id="GO:0006396">
    <property type="term" value="P:RNA processing"/>
    <property type="evidence" value="ECO:0007669"/>
    <property type="project" value="InterPro"/>
</dbReference>
<dbReference type="CDD" id="cd02393">
    <property type="entry name" value="KH-I_PNPase"/>
    <property type="match status" value="1"/>
</dbReference>
<dbReference type="CDD" id="cd11364">
    <property type="entry name" value="RNase_PH_PNPase_2"/>
    <property type="match status" value="1"/>
</dbReference>
<dbReference type="CDD" id="cd04472">
    <property type="entry name" value="S1_PNPase"/>
    <property type="match status" value="1"/>
</dbReference>
<dbReference type="FunFam" id="2.40.50.140:FF:000069">
    <property type="entry name" value="Polyribonucleotide nucleotidyltransferase"/>
    <property type="match status" value="1"/>
</dbReference>
<dbReference type="FunFam" id="3.30.1370.10:FF:000001">
    <property type="entry name" value="Polyribonucleotide nucleotidyltransferase"/>
    <property type="match status" value="1"/>
</dbReference>
<dbReference type="FunFam" id="3.30.230.70:FF:000001">
    <property type="entry name" value="Polyribonucleotide nucleotidyltransferase"/>
    <property type="match status" value="1"/>
</dbReference>
<dbReference type="FunFam" id="3.30.230.70:FF:000002">
    <property type="entry name" value="Polyribonucleotide nucleotidyltransferase"/>
    <property type="match status" value="1"/>
</dbReference>
<dbReference type="Gene3D" id="3.30.230.70">
    <property type="entry name" value="GHMP Kinase, N-terminal domain"/>
    <property type="match status" value="2"/>
</dbReference>
<dbReference type="Gene3D" id="3.30.1370.10">
    <property type="entry name" value="K Homology domain, type 1"/>
    <property type="match status" value="1"/>
</dbReference>
<dbReference type="Gene3D" id="2.40.50.140">
    <property type="entry name" value="Nucleic acid-binding proteins"/>
    <property type="match status" value="1"/>
</dbReference>
<dbReference type="HAMAP" id="MF_01595">
    <property type="entry name" value="PNPase"/>
    <property type="match status" value="1"/>
</dbReference>
<dbReference type="InterPro" id="IPR001247">
    <property type="entry name" value="ExoRNase_PH_dom1"/>
</dbReference>
<dbReference type="InterPro" id="IPR015847">
    <property type="entry name" value="ExoRNase_PH_dom2"/>
</dbReference>
<dbReference type="InterPro" id="IPR036345">
    <property type="entry name" value="ExoRNase_PH_dom2_sf"/>
</dbReference>
<dbReference type="InterPro" id="IPR014069">
    <property type="entry name" value="GPSI/PNP"/>
</dbReference>
<dbReference type="InterPro" id="IPR004087">
    <property type="entry name" value="KH_dom"/>
</dbReference>
<dbReference type="InterPro" id="IPR004088">
    <property type="entry name" value="KH_dom_type_1"/>
</dbReference>
<dbReference type="InterPro" id="IPR036612">
    <property type="entry name" value="KH_dom_type_1_sf"/>
</dbReference>
<dbReference type="InterPro" id="IPR012340">
    <property type="entry name" value="NA-bd_OB-fold"/>
</dbReference>
<dbReference type="InterPro" id="IPR012162">
    <property type="entry name" value="PNPase"/>
</dbReference>
<dbReference type="InterPro" id="IPR027408">
    <property type="entry name" value="PNPase/RNase_PH_dom_sf"/>
</dbReference>
<dbReference type="InterPro" id="IPR015848">
    <property type="entry name" value="PNPase_PH_RNA-bd_bac/org-type"/>
</dbReference>
<dbReference type="InterPro" id="IPR036456">
    <property type="entry name" value="PNPase_PH_RNA-bd_sf"/>
</dbReference>
<dbReference type="InterPro" id="IPR020568">
    <property type="entry name" value="Ribosomal_Su5_D2-typ_SF"/>
</dbReference>
<dbReference type="InterPro" id="IPR003029">
    <property type="entry name" value="S1_domain"/>
</dbReference>
<dbReference type="NCBIfam" id="TIGR03591">
    <property type="entry name" value="polynuc_phos"/>
    <property type="match status" value="1"/>
</dbReference>
<dbReference type="NCBIfam" id="TIGR02696">
    <property type="entry name" value="pppGpp_PNP"/>
    <property type="match status" value="1"/>
</dbReference>
<dbReference type="NCBIfam" id="NF008805">
    <property type="entry name" value="PRK11824.1"/>
    <property type="match status" value="1"/>
</dbReference>
<dbReference type="PANTHER" id="PTHR11252">
    <property type="entry name" value="POLYRIBONUCLEOTIDE NUCLEOTIDYLTRANSFERASE"/>
    <property type="match status" value="1"/>
</dbReference>
<dbReference type="PANTHER" id="PTHR11252:SF0">
    <property type="entry name" value="POLYRIBONUCLEOTIDE NUCLEOTIDYLTRANSFERASE 1, MITOCHONDRIAL"/>
    <property type="match status" value="1"/>
</dbReference>
<dbReference type="Pfam" id="PF00013">
    <property type="entry name" value="KH_1"/>
    <property type="match status" value="1"/>
</dbReference>
<dbReference type="Pfam" id="PF03726">
    <property type="entry name" value="PNPase"/>
    <property type="match status" value="1"/>
</dbReference>
<dbReference type="Pfam" id="PF01138">
    <property type="entry name" value="RNase_PH"/>
    <property type="match status" value="2"/>
</dbReference>
<dbReference type="Pfam" id="PF03725">
    <property type="entry name" value="RNase_PH_C"/>
    <property type="match status" value="1"/>
</dbReference>
<dbReference type="Pfam" id="PF00575">
    <property type="entry name" value="S1"/>
    <property type="match status" value="1"/>
</dbReference>
<dbReference type="PIRSF" id="PIRSF005499">
    <property type="entry name" value="PNPase"/>
    <property type="match status" value="1"/>
</dbReference>
<dbReference type="SMART" id="SM00322">
    <property type="entry name" value="KH"/>
    <property type="match status" value="1"/>
</dbReference>
<dbReference type="SMART" id="SM00316">
    <property type="entry name" value="S1"/>
    <property type="match status" value="1"/>
</dbReference>
<dbReference type="SUPFAM" id="SSF54791">
    <property type="entry name" value="Eukaryotic type KH-domain (KH-domain type I)"/>
    <property type="match status" value="1"/>
</dbReference>
<dbReference type="SUPFAM" id="SSF50249">
    <property type="entry name" value="Nucleic acid-binding proteins"/>
    <property type="match status" value="1"/>
</dbReference>
<dbReference type="SUPFAM" id="SSF46915">
    <property type="entry name" value="Polynucleotide phosphorylase/guanosine pentaphosphate synthase (PNPase/GPSI), domain 3"/>
    <property type="match status" value="1"/>
</dbReference>
<dbReference type="SUPFAM" id="SSF55666">
    <property type="entry name" value="Ribonuclease PH domain 2-like"/>
    <property type="match status" value="2"/>
</dbReference>
<dbReference type="SUPFAM" id="SSF54211">
    <property type="entry name" value="Ribosomal protein S5 domain 2-like"/>
    <property type="match status" value="2"/>
</dbReference>
<dbReference type="PROSITE" id="PS50084">
    <property type="entry name" value="KH_TYPE_1"/>
    <property type="match status" value="1"/>
</dbReference>
<dbReference type="PROSITE" id="PS50126">
    <property type="entry name" value="S1"/>
    <property type="match status" value="1"/>
</dbReference>
<feature type="chain" id="PRO_0000329722" description="Polyribonucleotide nucleotidyltransferase">
    <location>
        <begin position="1"/>
        <end position="759"/>
    </location>
</feature>
<feature type="domain" description="KH" evidence="1">
    <location>
        <begin position="588"/>
        <end position="647"/>
    </location>
</feature>
<feature type="domain" description="S1 motif" evidence="1">
    <location>
        <begin position="659"/>
        <end position="728"/>
    </location>
</feature>
<feature type="region of interest" description="Disordered" evidence="2">
    <location>
        <begin position="734"/>
        <end position="759"/>
    </location>
</feature>
<feature type="compositionally biased region" description="Low complexity" evidence="2">
    <location>
        <begin position="741"/>
        <end position="759"/>
    </location>
</feature>
<feature type="binding site" evidence="1">
    <location>
        <position position="522"/>
    </location>
    <ligand>
        <name>Mg(2+)</name>
        <dbReference type="ChEBI" id="CHEBI:18420"/>
    </ligand>
</feature>
<feature type="binding site" evidence="1">
    <location>
        <position position="528"/>
    </location>
    <ligand>
        <name>Mg(2+)</name>
        <dbReference type="ChEBI" id="CHEBI:18420"/>
    </ligand>
</feature>
<accession>A1UET6</accession>
<reference key="1">
    <citation type="submission" date="2006-12" db="EMBL/GenBank/DDBJ databases">
        <title>Complete sequence of chromosome of Mycobacterium sp. KMS.</title>
        <authorList>
            <consortium name="US DOE Joint Genome Institute"/>
            <person name="Copeland A."/>
            <person name="Lucas S."/>
            <person name="Lapidus A."/>
            <person name="Barry K."/>
            <person name="Detter J.C."/>
            <person name="Glavina del Rio T."/>
            <person name="Hammon N."/>
            <person name="Israni S."/>
            <person name="Dalin E."/>
            <person name="Tice H."/>
            <person name="Pitluck S."/>
            <person name="Kiss H."/>
            <person name="Brettin T."/>
            <person name="Bruce D."/>
            <person name="Han C."/>
            <person name="Tapia R."/>
            <person name="Gilna P."/>
            <person name="Schmutz J."/>
            <person name="Larimer F."/>
            <person name="Land M."/>
            <person name="Hauser L."/>
            <person name="Kyrpides N."/>
            <person name="Mikhailova N."/>
            <person name="Miller C.D."/>
            <person name="Richardson P."/>
        </authorList>
    </citation>
    <scope>NUCLEOTIDE SEQUENCE [LARGE SCALE GENOMIC DNA]</scope>
    <source>
        <strain>KMS</strain>
    </source>
</reference>
<keyword id="KW-0963">Cytoplasm</keyword>
<keyword id="KW-0460">Magnesium</keyword>
<keyword id="KW-0479">Metal-binding</keyword>
<keyword id="KW-0548">Nucleotidyltransferase</keyword>
<keyword id="KW-0694">RNA-binding</keyword>
<keyword id="KW-0808">Transferase</keyword>
<sequence>MSVVEIEDGVYESTAVIDNGSFGTRTIRFETGRLAQQAAGAVVAYLDDETMLLSATSASKSPKDHFDFFPLTIDVEERMYAAGRIPGSFFRREGRPSTDAILTCRLIDRPLRPTFVSGLRNEIQVVVTVMSLDPKDLYDVVAINAASASTQIAGLPFSGPVGGVRVALIDGTWVAFPTVEQLERAVFDMVVAGRKTADDVAIMMVEAEATDKVVELVAGGAQAPTEAVVAEGLEAAKPFIKVLCEAQQELAGRAAKPTADYPLFPEYGEDVYYAVASVATDALSEALTIAGKEERNNRTDEIKVEVLGRLADQFAGREKEIGGAFRSLTKKLVRQRILTDHFRIDGRGVTDIRALSAEVAIVPRAHGSALFERGETQILGVTTLDMVKMAQQIDSLGPETSKRYMHHYNFPPYSTGETGRVGSPKRREIGHGALAERALMPVLPSVEEFPYAIRQVSEALSSNGSTSMGSVCASTLSLLNAGVPLKAPVAGIAMGLVSDDVEVDGKTERRFVTLTDILGAEDAFGDMDFKCAGTKDFVTALQLDTKLDGIPSQVLAGALAQAKDARITILEVMAEAIDAPDEMSPYAPRITTIKVPVDKIGEVIGPKGKMINSITEETGASISIEDDGTVFVGASNGEAAQAAIDKINAIANPQLPKIGERFLGTVVKTTDFGAFVSLLPGRDGLVHISKLGRGKRIAKVEDVAKVGDKLRVEIADIDNRGKISLVLVAEEEAAEASDNGSATPSDKAPATADATTAGN</sequence>
<name>PNP_MYCSK</name>